<accession>Q2GFV4</accession>
<dbReference type="EMBL" id="CP000236">
    <property type="protein sequence ID" value="ABD45257.1"/>
    <property type="molecule type" value="Genomic_DNA"/>
</dbReference>
<dbReference type="RefSeq" id="WP_011452874.1">
    <property type="nucleotide sequence ID" value="NC_007799.1"/>
</dbReference>
<dbReference type="SMR" id="Q2GFV4"/>
<dbReference type="STRING" id="205920.ECH_0884"/>
<dbReference type="KEGG" id="ech:ECH_0884"/>
<dbReference type="eggNOG" id="COG0323">
    <property type="taxonomic scope" value="Bacteria"/>
</dbReference>
<dbReference type="HOGENOM" id="CLU_004131_4_2_5"/>
<dbReference type="OrthoDB" id="9763467at2"/>
<dbReference type="Proteomes" id="UP000008320">
    <property type="component" value="Chromosome"/>
</dbReference>
<dbReference type="GO" id="GO:0032300">
    <property type="term" value="C:mismatch repair complex"/>
    <property type="evidence" value="ECO:0007669"/>
    <property type="project" value="InterPro"/>
</dbReference>
<dbReference type="GO" id="GO:0005524">
    <property type="term" value="F:ATP binding"/>
    <property type="evidence" value="ECO:0007669"/>
    <property type="project" value="InterPro"/>
</dbReference>
<dbReference type="GO" id="GO:0016887">
    <property type="term" value="F:ATP hydrolysis activity"/>
    <property type="evidence" value="ECO:0007669"/>
    <property type="project" value="InterPro"/>
</dbReference>
<dbReference type="GO" id="GO:0140664">
    <property type="term" value="F:ATP-dependent DNA damage sensor activity"/>
    <property type="evidence" value="ECO:0007669"/>
    <property type="project" value="InterPro"/>
</dbReference>
<dbReference type="GO" id="GO:0030983">
    <property type="term" value="F:mismatched DNA binding"/>
    <property type="evidence" value="ECO:0007669"/>
    <property type="project" value="InterPro"/>
</dbReference>
<dbReference type="GO" id="GO:0006298">
    <property type="term" value="P:mismatch repair"/>
    <property type="evidence" value="ECO:0007669"/>
    <property type="project" value="UniProtKB-UniRule"/>
</dbReference>
<dbReference type="CDD" id="cd16926">
    <property type="entry name" value="HATPase_MutL-MLH-PMS-like"/>
    <property type="match status" value="1"/>
</dbReference>
<dbReference type="CDD" id="cd00782">
    <property type="entry name" value="MutL_Trans"/>
    <property type="match status" value="1"/>
</dbReference>
<dbReference type="FunFam" id="3.30.565.10:FF:000003">
    <property type="entry name" value="DNA mismatch repair endonuclease MutL"/>
    <property type="match status" value="1"/>
</dbReference>
<dbReference type="Gene3D" id="3.30.230.10">
    <property type="match status" value="1"/>
</dbReference>
<dbReference type="Gene3D" id="3.30.565.10">
    <property type="entry name" value="Histidine kinase-like ATPase, C-terminal domain"/>
    <property type="match status" value="1"/>
</dbReference>
<dbReference type="Gene3D" id="3.30.1540.20">
    <property type="entry name" value="MutL, C-terminal domain, dimerisation subdomain"/>
    <property type="match status" value="1"/>
</dbReference>
<dbReference type="Gene3D" id="3.30.1370.100">
    <property type="entry name" value="MutL, C-terminal domain, regulatory subdomain"/>
    <property type="match status" value="1"/>
</dbReference>
<dbReference type="HAMAP" id="MF_00149">
    <property type="entry name" value="DNA_mis_repair"/>
    <property type="match status" value="1"/>
</dbReference>
<dbReference type="InterPro" id="IPR014762">
    <property type="entry name" value="DNA_mismatch_repair_CS"/>
</dbReference>
<dbReference type="InterPro" id="IPR020667">
    <property type="entry name" value="DNA_mismatch_repair_MutL"/>
</dbReference>
<dbReference type="InterPro" id="IPR013507">
    <property type="entry name" value="DNA_mismatch_S5_2-like"/>
</dbReference>
<dbReference type="InterPro" id="IPR036890">
    <property type="entry name" value="HATPase_C_sf"/>
</dbReference>
<dbReference type="InterPro" id="IPR002099">
    <property type="entry name" value="MutL/Mlh/PMS"/>
</dbReference>
<dbReference type="InterPro" id="IPR038973">
    <property type="entry name" value="MutL/Mlh/Pms-like"/>
</dbReference>
<dbReference type="InterPro" id="IPR014790">
    <property type="entry name" value="MutL_C"/>
</dbReference>
<dbReference type="InterPro" id="IPR042120">
    <property type="entry name" value="MutL_C_dimsub"/>
</dbReference>
<dbReference type="InterPro" id="IPR042121">
    <property type="entry name" value="MutL_C_regsub"/>
</dbReference>
<dbReference type="InterPro" id="IPR037198">
    <property type="entry name" value="MutL_C_sf"/>
</dbReference>
<dbReference type="InterPro" id="IPR020568">
    <property type="entry name" value="Ribosomal_Su5_D2-typ_SF"/>
</dbReference>
<dbReference type="InterPro" id="IPR014721">
    <property type="entry name" value="Ribsml_uS5_D2-typ_fold_subgr"/>
</dbReference>
<dbReference type="NCBIfam" id="TIGR00585">
    <property type="entry name" value="mutl"/>
    <property type="match status" value="1"/>
</dbReference>
<dbReference type="NCBIfam" id="NF000952">
    <property type="entry name" value="PRK00095.2-2"/>
    <property type="match status" value="1"/>
</dbReference>
<dbReference type="PANTHER" id="PTHR10073">
    <property type="entry name" value="DNA MISMATCH REPAIR PROTEIN MLH, PMS, MUTL"/>
    <property type="match status" value="1"/>
</dbReference>
<dbReference type="PANTHER" id="PTHR10073:SF12">
    <property type="entry name" value="DNA MISMATCH REPAIR PROTEIN MLH1"/>
    <property type="match status" value="1"/>
</dbReference>
<dbReference type="Pfam" id="PF01119">
    <property type="entry name" value="DNA_mis_repair"/>
    <property type="match status" value="1"/>
</dbReference>
<dbReference type="Pfam" id="PF13589">
    <property type="entry name" value="HATPase_c_3"/>
    <property type="match status" value="1"/>
</dbReference>
<dbReference type="Pfam" id="PF08676">
    <property type="entry name" value="MutL_C"/>
    <property type="match status" value="1"/>
</dbReference>
<dbReference type="SMART" id="SM01340">
    <property type="entry name" value="DNA_mis_repair"/>
    <property type="match status" value="1"/>
</dbReference>
<dbReference type="SMART" id="SM00853">
    <property type="entry name" value="MutL_C"/>
    <property type="match status" value="1"/>
</dbReference>
<dbReference type="SUPFAM" id="SSF55874">
    <property type="entry name" value="ATPase domain of HSP90 chaperone/DNA topoisomerase II/histidine kinase"/>
    <property type="match status" value="1"/>
</dbReference>
<dbReference type="SUPFAM" id="SSF118116">
    <property type="entry name" value="DNA mismatch repair protein MutL"/>
    <property type="match status" value="1"/>
</dbReference>
<dbReference type="SUPFAM" id="SSF54211">
    <property type="entry name" value="Ribosomal protein S5 domain 2-like"/>
    <property type="match status" value="1"/>
</dbReference>
<dbReference type="PROSITE" id="PS00058">
    <property type="entry name" value="DNA_MISMATCH_REPAIR_1"/>
    <property type="match status" value="1"/>
</dbReference>
<evidence type="ECO:0000255" key="1">
    <source>
        <dbReference type="HAMAP-Rule" id="MF_00149"/>
    </source>
</evidence>
<reference key="1">
    <citation type="journal article" date="2006" name="PLoS Genet.">
        <title>Comparative genomics of emerging human ehrlichiosis agents.</title>
        <authorList>
            <person name="Dunning Hotopp J.C."/>
            <person name="Lin M."/>
            <person name="Madupu R."/>
            <person name="Crabtree J."/>
            <person name="Angiuoli S.V."/>
            <person name="Eisen J.A."/>
            <person name="Seshadri R."/>
            <person name="Ren Q."/>
            <person name="Wu M."/>
            <person name="Utterback T.R."/>
            <person name="Smith S."/>
            <person name="Lewis M."/>
            <person name="Khouri H."/>
            <person name="Zhang C."/>
            <person name="Niu H."/>
            <person name="Lin Q."/>
            <person name="Ohashi N."/>
            <person name="Zhi N."/>
            <person name="Nelson W.C."/>
            <person name="Brinkac L.M."/>
            <person name="Dodson R.J."/>
            <person name="Rosovitz M.J."/>
            <person name="Sundaram J.P."/>
            <person name="Daugherty S.C."/>
            <person name="Davidsen T."/>
            <person name="Durkin A.S."/>
            <person name="Gwinn M.L."/>
            <person name="Haft D.H."/>
            <person name="Selengut J.D."/>
            <person name="Sullivan S.A."/>
            <person name="Zafar N."/>
            <person name="Zhou L."/>
            <person name="Benahmed F."/>
            <person name="Forberger H."/>
            <person name="Halpin R."/>
            <person name="Mulligan S."/>
            <person name="Robinson J."/>
            <person name="White O."/>
            <person name="Rikihisa Y."/>
            <person name="Tettelin H."/>
        </authorList>
    </citation>
    <scope>NUCLEOTIDE SEQUENCE [LARGE SCALE GENOMIC DNA]</scope>
    <source>
        <strain>ATCC CRL-10679 / Arkansas</strain>
    </source>
</reference>
<sequence>MSIILLDPRTINRIAAGEVIECPASVVKELVENSIDAKATAISITIERGGRNLIIVSDNGIGIKKEDMEIAFARHATSKLPDGDLTKVRSLGFRGEGLTSIAAVGKVKMVSKYRDSDTAWLMVFEGGEKTQELTPDALSCGTYIEVRDLFFATPNRLKFLRTEKAEVQSIIDMMNKLAMVNHNVMFSLFVDNKQVFKYLTQQSNIDRLSEIKTLGMEFCKNSLPVNVKEEQIQLSGYIGSPTLSRGKSSLIYTFVNSRPVYDNLLIGAVRYAYSDFIEKDKYPVVVLYLDIPCDQVDANVHPNKSEVRFQDKKLVYRTVVNAIKEVLSINLNTKLKSISEFENDHFVHASMVNSRNIGNSVSSEFFKCFQNRKPLLNNDVQKYSSKNVETDDQSLLDTNVSFCTDSKMITNKLKEERVYENSREHINKGDSKIEVSNFDILGEKKNFVNLANNLLQESPSIDSGKFNTSKKVPSDSLIDTYPLGYALCQIHSRYIISQTQDSIVIIDQHAAHERLTYEYMKQVMAKEGIKRQILLIPEIIEMNNHLDLELLVEYKEKLLKLGLLIEPLGNLSVIVREVPALFGSFDVKSLIINIVDSIMEVGDTLFLDDKIKDICGTIACYSSIRSGRKLKIEEMNAILRNMENTAHSGQCNHGRPTYVELNLVEIDRLFSRR</sequence>
<comment type="function">
    <text evidence="1">This protein is involved in the repair of mismatches in DNA. It is required for dam-dependent methyl-directed DNA mismatch repair. May act as a 'molecular matchmaker', a protein that promotes the formation of a stable complex between two or more DNA-binding proteins in an ATP-dependent manner without itself being part of a final effector complex.</text>
</comment>
<comment type="similarity">
    <text evidence="1">Belongs to the DNA mismatch repair MutL/HexB family.</text>
</comment>
<proteinExistence type="inferred from homology"/>
<name>MUTL_EHRCR</name>
<protein>
    <recommendedName>
        <fullName evidence="1">DNA mismatch repair protein MutL</fullName>
    </recommendedName>
</protein>
<organism>
    <name type="scientific">Ehrlichia chaffeensis (strain ATCC CRL-10679 / Arkansas)</name>
    <dbReference type="NCBI Taxonomy" id="205920"/>
    <lineage>
        <taxon>Bacteria</taxon>
        <taxon>Pseudomonadati</taxon>
        <taxon>Pseudomonadota</taxon>
        <taxon>Alphaproteobacteria</taxon>
        <taxon>Rickettsiales</taxon>
        <taxon>Anaplasmataceae</taxon>
        <taxon>Ehrlichia</taxon>
    </lineage>
</organism>
<keyword id="KW-0227">DNA damage</keyword>
<keyword id="KW-0234">DNA repair</keyword>
<keyword id="KW-1185">Reference proteome</keyword>
<gene>
    <name evidence="1" type="primary">mutL</name>
    <name type="ordered locus">ECH_0884</name>
</gene>
<feature type="chain" id="PRO_1000010014" description="DNA mismatch repair protein MutL">
    <location>
        <begin position="1"/>
        <end position="673"/>
    </location>
</feature>